<gene>
    <name evidence="3" type="primary">ptaI</name>
    <name type="ORF">PFICI_10834</name>
</gene>
<keyword id="KW-0489">Methyltransferase</keyword>
<keyword id="KW-1185">Reference proteome</keyword>
<keyword id="KW-0949">S-adenosyl-L-methionine</keyword>
<keyword id="KW-0808">Transferase</keyword>
<accession>A0A067XMT3</accession>
<accession>W3WSX1</accession>
<dbReference type="EC" id="2.1.1.-" evidence="5"/>
<dbReference type="EMBL" id="KC145148">
    <property type="protein sequence ID" value="AGO59038.1"/>
    <property type="molecule type" value="Genomic_DNA"/>
</dbReference>
<dbReference type="EMBL" id="KI912116">
    <property type="protein sequence ID" value="ETS76960.1"/>
    <property type="molecule type" value="Genomic_DNA"/>
</dbReference>
<dbReference type="RefSeq" id="XP_007837606.1">
    <property type="nucleotide sequence ID" value="XM_007839415.1"/>
</dbReference>
<dbReference type="SMR" id="A0A067XMT3"/>
<dbReference type="GeneID" id="19275847"/>
<dbReference type="KEGG" id="pfy:PFICI_10834"/>
<dbReference type="eggNOG" id="KOG3010">
    <property type="taxonomic scope" value="Eukaryota"/>
</dbReference>
<dbReference type="InParanoid" id="A0A067XMT3"/>
<dbReference type="OMA" id="RMATRIC"/>
<dbReference type="OrthoDB" id="10004862at2759"/>
<dbReference type="Proteomes" id="UP000030651">
    <property type="component" value="Unassembled WGS sequence"/>
</dbReference>
<dbReference type="GO" id="GO:0008168">
    <property type="term" value="F:methyltransferase activity"/>
    <property type="evidence" value="ECO:0007669"/>
    <property type="project" value="UniProtKB-KW"/>
</dbReference>
<dbReference type="GO" id="GO:0032259">
    <property type="term" value="P:methylation"/>
    <property type="evidence" value="ECO:0007669"/>
    <property type="project" value="UniProtKB-KW"/>
</dbReference>
<dbReference type="CDD" id="cd02440">
    <property type="entry name" value="AdoMet_MTases"/>
    <property type="match status" value="1"/>
</dbReference>
<dbReference type="Gene3D" id="3.40.50.150">
    <property type="entry name" value="Vaccinia Virus protein VP39"/>
    <property type="match status" value="1"/>
</dbReference>
<dbReference type="InterPro" id="IPR051052">
    <property type="entry name" value="Diverse_substrate_MTase"/>
</dbReference>
<dbReference type="InterPro" id="IPR013217">
    <property type="entry name" value="Methyltransf_12"/>
</dbReference>
<dbReference type="InterPro" id="IPR029063">
    <property type="entry name" value="SAM-dependent_MTases_sf"/>
</dbReference>
<dbReference type="PANTHER" id="PTHR44942">
    <property type="entry name" value="METHYLTRANSF_11 DOMAIN-CONTAINING PROTEIN"/>
    <property type="match status" value="1"/>
</dbReference>
<dbReference type="PANTHER" id="PTHR44942:SF4">
    <property type="entry name" value="METHYLTRANSFERASE TYPE 11 DOMAIN-CONTAINING PROTEIN"/>
    <property type="match status" value="1"/>
</dbReference>
<dbReference type="Pfam" id="PF08242">
    <property type="entry name" value="Methyltransf_12"/>
    <property type="match status" value="1"/>
</dbReference>
<dbReference type="SUPFAM" id="SSF53335">
    <property type="entry name" value="S-adenosyl-L-methionine-dependent methyltransferases"/>
    <property type="match status" value="1"/>
</dbReference>
<sequence length="339" mass="37514">MPSPTNPAKVETPFTTAALGNGVDFWKAYVENRPHPSDSFFELISEYHHSHGDSAAQSAIAHDVGTGPGNIAEKLLRHFDHVVGSDVNEQALAAAPALLPADSIKRMTFVKSSAEDLASANIPESVGKGQTDLILVSECIPLLDISKAFAAFRALLRPGGTLAIYFYSRPIFTGDNEAELNQLYDRIATRVCQFLLPFKGTPGFPIHYRAAEAMSSGLDSIPFDPEAWQDVVRYKWNADVPLTFNSKEGYDFEVEPVDRRDHSTEITKEITDRDFWAEEWDIGRVASFLDSVFPNYRNKAGDKFEEVQSLFTELETALGGPKATRKVSFPVVLLLATRK</sequence>
<evidence type="ECO:0000269" key="1">
    <source>
    </source>
</evidence>
<evidence type="ECO:0000269" key="2">
    <source>
    </source>
</evidence>
<evidence type="ECO:0000303" key="3">
    <source>
    </source>
</evidence>
<evidence type="ECO:0000305" key="4"/>
<evidence type="ECO:0000305" key="5">
    <source>
    </source>
</evidence>
<proteinExistence type="evidence at transcript level"/>
<comment type="function">
    <text evidence="1">Methyltransferase; part of the gene cluster that mediates the biosynthesis of pestheic acid, a diphenyl ether which is a biosynthetic precursor of the unique chloropupukeananes (PubMed:24302702). The biosynthesis initiates from condensation of acetate and malonate units catalyzed by the non-reducing PKS ptaA (PubMed:24302702). As the ptaA protein is TE/CLC domain-deficient, hydrolysis and Claisen cyclization of the polyketide could be catalyzed by ptaB containing a beta-lactamase domain (PubMed:24302702). The ptaB protein might hydrolyze the thioester bond between the ACP of ptaA and the intermediate to release atrochrysone carboxylic acid, which is spontaneously dehydrated to form endocrocin anthrone (PubMed:24302702). Endocrocin anthrone is then converted to endocrocin, catalyzed by the anthrone oxygenase ptaC (PubMed:24302702). Spontaneous decarboxylation of endocrocin occurs to generate emodin (PubMed:24302702). An O-methyltransferase (ptaH or ptaI) could methylate emodin to form physcion (PubMed:24302702). PtaJ could then catalyze the oxidative cleavage of physcion, and rotation of the intermediate could then afford desmethylisosulochrin (PubMed:24302702). PtaF, a putative NADH-dependent oxidoreductase, might also participate in the oxidative cleavage step (PubMed:24302702). Desmethylisosulochrin is then transformed by another O-methyltransferase (ptaH or ptaI) to form isosulochrin (PubMed:24302702). Chlorination of isosulochrin by ptaM in the cyclohexadienone B ring then produces chloroisosulochrin (PubMed:24302702). PtaE is responsible for the oxidative coupling reactions of both benzophenones isosulouchrin and chloroisosulochrin to RES-1214-1 and pestheic acid respectively, regardless of chlorination.</text>
</comment>
<comment type="pathway">
    <text evidence="5">Secondary metabolite biosynthesis.</text>
</comment>
<comment type="induction">
    <text evidence="2 5">The cluster is expressed in rice fermentation medium (PubMed:25623211). Three regulators are located in the cluster (ptaR1, ptaR2 and ptaR3), suggesting that the production of pestheic acid is controlled by a complex regulatory mechanism (PubMed:24302702).</text>
</comment>
<comment type="similarity">
    <text evidence="4">Belongs to the methyltransferase superfamily.</text>
</comment>
<organism>
    <name type="scientific">Pestalotiopsis fici (strain W106-1 / CGMCC3.15140)</name>
    <dbReference type="NCBI Taxonomy" id="1229662"/>
    <lineage>
        <taxon>Eukaryota</taxon>
        <taxon>Fungi</taxon>
        <taxon>Dikarya</taxon>
        <taxon>Ascomycota</taxon>
        <taxon>Pezizomycotina</taxon>
        <taxon>Sordariomycetes</taxon>
        <taxon>Xylariomycetidae</taxon>
        <taxon>Amphisphaeriales</taxon>
        <taxon>Sporocadaceae</taxon>
        <taxon>Pestalotiopsis</taxon>
    </lineage>
</organism>
<name>PTAI_PESFW</name>
<reference key="1">
    <citation type="journal article" date="2014" name="ChemBioChem">
        <title>Identification of the first diphenyl ether gene cluster for pestheic acid biosynthesis in plant endophyte Pestalotiopsis fici.</title>
        <authorList>
            <person name="Xu X."/>
            <person name="Liu L."/>
            <person name="Zhang F."/>
            <person name="Wang W."/>
            <person name="Li J."/>
            <person name="Guo L."/>
            <person name="Che Y."/>
            <person name="Liu G."/>
        </authorList>
    </citation>
    <scope>NUCLEOTIDE SEQUENCE [GENOMIC DNA]</scope>
    <scope>FUNCTION</scope>
    <scope>INDUCTION</scope>
    <source>
        <strain>W106-1 / CGMCC3.15140</strain>
    </source>
</reference>
<reference key="2">
    <citation type="journal article" date="2015" name="BMC Genomics">
        <title>Genomic and transcriptomic analysis of the endophytic fungus Pestalotiopsis fici reveals its lifestyle and high potential for synthesis of natural products.</title>
        <authorList>
            <person name="Wang X."/>
            <person name="Zhang X."/>
            <person name="Liu L."/>
            <person name="Xiang M."/>
            <person name="Wang W."/>
            <person name="Sun X."/>
            <person name="Che Y."/>
            <person name="Guo L."/>
            <person name="Liu G."/>
            <person name="Guo L."/>
            <person name="Wang C."/>
            <person name="Yin W.B."/>
            <person name="Stadler M."/>
            <person name="Zhang X."/>
            <person name="Liu X."/>
        </authorList>
    </citation>
    <scope>NUCLEOTIDE SEQUENCE [LARGE SCALE GENOMIC DNA]</scope>
    <scope>INDUCTION</scope>
    <source>
        <strain>W106-1 / CGMCC3.15140</strain>
    </source>
</reference>
<protein>
    <recommendedName>
        <fullName evidence="3">Methyltransferase ptaI</fullName>
        <ecNumber evidence="5">2.1.1.-</ecNumber>
    </recommendedName>
    <alternativeName>
        <fullName evidence="3">Pestheic acid biosynthesis cluster protein I</fullName>
    </alternativeName>
</protein>
<feature type="chain" id="PRO_0000443048" description="Methyltransferase ptaI">
    <location>
        <begin position="1"/>
        <end position="339"/>
    </location>
</feature>